<protein>
    <recommendedName>
        <fullName>Vacuolar protein sorting-associated protein 11 homolog</fullName>
    </recommendedName>
</protein>
<comment type="function">
    <text evidence="1">Plays a role in vesicle-mediated protein trafficking to lysosomal compartments including the endocytic membrane transport and autophagic pathways. Believed to act as a core component of the putative HOPS and CORVET endosomal tethering complexes which are proposed to be involved in the Rab5-to-Rab7 endosome conversion probably implicating MON1A/B, and via binding SNAREs and SNARE complexes to mediate tethering and docking events during SNARE-mediated membrane fusion. The HOPS complex is proposed to be recruited to Rab7 on the late endosomal membrane and to regulate late endocytic, phagocytic and autophagic traffic towards lysosomes. The CORVET complex is proposed to function as a Rab5 effector to mediate early endosome fusion probably in specific endosome subpopulations. Required for fusion of endosomes and autophagosomes with lysosomes. Involved in cargo transport from early to late endosomes and required for the transition from early to late endosomes (By similarity).</text>
</comment>
<comment type="subunit">
    <text evidence="1 4 5 7">Core component of at least two putative endosomal tethering complexes, the homotypic fusion and vacuole protein sorting (HOPS) complex and the class C core vacuole/endosome tethering (CORVET) complex. Their common core is composed of the class C Vps proteins VPS11, VPS16, VPS18 and VPS33A, which in HOPS further associates with VPS39 and VPS41 and in CORVET with VPS8 and TGFBRAP1 (PubMed:25266290). Interacts with RAB5C (PubMed:25266290). Interacts with TGFBRAP1, MON1B, STX7, STX17, ECPAS, EZR, RDX, MSN (By similarity). Associates with adaptor protein complex 3 (AP-3) and clathrin:AP-3 complexes (PubMed:21411634). Interacts with PLEKHM1 (By similarity).</text>
</comment>
<comment type="interaction">
    <interactant intactId="EBI-2527812">
        <id>Q91W86</id>
    </interactant>
    <interactant intactId="EBI-749080">
        <id>Q9H9C1</id>
        <label>VIPAS39</label>
    </interactant>
    <organismsDiffer>true</organismsDiffer>
    <experiments>3</experiments>
</comment>
<comment type="subcellular location">
    <subcellularLocation>
        <location evidence="1">Late endosome membrane</location>
        <topology evidence="1">Peripheral membrane protein</topology>
        <orientation evidence="6">Cytoplasmic side</orientation>
    </subcellularLocation>
    <subcellularLocation>
        <location evidence="1">Lysosome membrane</location>
        <topology evidence="1">Peripheral membrane protein</topology>
        <orientation evidence="6">Cytoplasmic side</orientation>
    </subcellularLocation>
    <subcellularLocation>
        <location evidence="6">Cytoplasmic vesicle</location>
    </subcellularLocation>
    <subcellularLocation>
        <location evidence="6">Early endosome</location>
    </subcellularLocation>
    <subcellularLocation>
        <location evidence="6">Cytoplasmic vesicle</location>
        <location evidence="6">Autophagosome</location>
    </subcellularLocation>
    <subcellularLocation>
        <location evidence="6">Cytoplasmic vesicle</location>
        <location evidence="6">Clathrin-coated vesicle</location>
    </subcellularLocation>
</comment>
<comment type="similarity">
    <text evidence="6">Belongs to the VPS11 family.</text>
</comment>
<feature type="initiator methionine" description="Removed" evidence="1">
    <location>
        <position position="1"/>
    </location>
</feature>
<feature type="chain" id="PRO_0000055903" description="Vacuolar protein sorting-associated protein 11 homolog">
    <location>
        <begin position="2"/>
        <end position="941"/>
    </location>
</feature>
<feature type="repeat" description="CHCR 1">
    <location>
        <begin position="411"/>
        <end position="561"/>
    </location>
</feature>
<feature type="repeat" description="CHCR 2">
    <location>
        <begin position="572"/>
        <end position="736"/>
    </location>
</feature>
<feature type="zinc finger region" description="RING-type" evidence="3">
    <location>
        <begin position="822"/>
        <end position="861"/>
    </location>
</feature>
<feature type="coiled-coil region" evidence="2">
    <location>
        <begin position="772"/>
        <end position="813"/>
    </location>
</feature>
<feature type="modified residue" description="N-acetylalanine" evidence="1">
    <location>
        <position position="2"/>
    </location>
</feature>
<feature type="modified residue" description="Phosphoserine" evidence="1">
    <location>
        <position position="813"/>
    </location>
</feature>
<feature type="modified residue" description="Omega-N-methylarginine" evidence="8">
    <location>
        <position position="904"/>
    </location>
</feature>
<feature type="modified residue" description="Phosphoserine" evidence="1">
    <location>
        <position position="924"/>
    </location>
</feature>
<feature type="sequence conflict" description="In Ref. 2; AAH16258." evidence="6" ref="2">
    <original>M</original>
    <variation>HAS</variation>
    <location>
        <position position="1"/>
    </location>
</feature>
<feature type="sequence conflict" description="In Ref. 2; AAH16258." evidence="6" ref="2">
    <original>A</original>
    <variation>T</variation>
    <location>
        <position position="28"/>
    </location>
</feature>
<feature type="sequence conflict" description="In Ref. 2; AAH16258." evidence="6" ref="2">
    <original>V</original>
    <variation>T</variation>
    <location>
        <position position="34"/>
    </location>
</feature>
<feature type="sequence conflict" description="In Ref. 2; AAH16258." evidence="6" ref="2">
    <original>SA</original>
    <variation>PT</variation>
    <location>
        <begin position="37"/>
        <end position="38"/>
    </location>
</feature>
<feature type="sequence conflict" description="In Ref. 2; AAH16258." evidence="6" ref="2">
    <original>F</original>
    <variation>L</variation>
    <location>
        <position position="132"/>
    </location>
</feature>
<feature type="sequence conflict" description="In Ref. 2; AAH16258." evidence="6" ref="2">
    <original>N</original>
    <variation>S</variation>
    <location>
        <position position="186"/>
    </location>
</feature>
<feature type="sequence conflict" description="In Ref. 2; AAH16258." evidence="6" ref="2">
    <original>V</original>
    <variation>A</variation>
    <location>
        <position position="276"/>
    </location>
</feature>
<feature type="sequence conflict" description="In Ref. 2; AAH16258." evidence="6" ref="2">
    <original>G</original>
    <variation>V</variation>
    <location>
        <position position="326"/>
    </location>
</feature>
<feature type="sequence conflict" description="In Ref. 2; AAH16258." evidence="6" ref="2">
    <original>I</original>
    <variation>V</variation>
    <location>
        <position position="330"/>
    </location>
</feature>
<feature type="sequence conflict" description="In Ref. 2; AAH16258." evidence="6" ref="2">
    <original>T</original>
    <variation>I</variation>
    <location>
        <position position="551"/>
    </location>
</feature>
<feature type="sequence conflict" description="In Ref. 2; AAH16258." evidence="6" ref="2">
    <original>AL</original>
    <variation>FP</variation>
    <location>
        <begin position="583"/>
        <end position="584"/>
    </location>
</feature>
<feature type="sequence conflict" description="In Ref. 2; AAH16258." evidence="6" ref="2">
    <original>S</original>
    <variation>N</variation>
    <location>
        <position position="589"/>
    </location>
</feature>
<keyword id="KW-0007">Acetylation</keyword>
<keyword id="KW-0072">Autophagy</keyword>
<keyword id="KW-0175">Coiled coil</keyword>
<keyword id="KW-0968">Cytoplasmic vesicle</keyword>
<keyword id="KW-0967">Endosome</keyword>
<keyword id="KW-0458">Lysosome</keyword>
<keyword id="KW-0472">Membrane</keyword>
<keyword id="KW-0479">Metal-binding</keyword>
<keyword id="KW-0488">Methylation</keyword>
<keyword id="KW-0547">Nucleotide-binding</keyword>
<keyword id="KW-0597">Phosphoprotein</keyword>
<keyword id="KW-0653">Protein transport</keyword>
<keyword id="KW-1185">Reference proteome</keyword>
<keyword id="KW-0677">Repeat</keyword>
<keyword id="KW-0813">Transport</keyword>
<keyword id="KW-0862">Zinc</keyword>
<keyword id="KW-0863">Zinc-finger</keyword>
<proteinExistence type="evidence at protein level"/>
<dbReference type="EMBL" id="AK004695">
    <property type="protein sequence ID" value="BAB23481.1"/>
    <property type="molecule type" value="mRNA"/>
</dbReference>
<dbReference type="EMBL" id="BC029004">
    <property type="protein sequence ID" value="AAH29004.1"/>
    <property type="molecule type" value="mRNA"/>
</dbReference>
<dbReference type="EMBL" id="BC016258">
    <property type="protein sequence ID" value="AAH16258.1"/>
    <property type="molecule type" value="mRNA"/>
</dbReference>
<dbReference type="CCDS" id="CCDS40599.1"/>
<dbReference type="RefSeq" id="NP_082165.1">
    <property type="nucleotide sequence ID" value="NM_027889.2"/>
</dbReference>
<dbReference type="SMR" id="Q91W86"/>
<dbReference type="BioGRID" id="214887">
    <property type="interactions" value="15"/>
</dbReference>
<dbReference type="FunCoup" id="Q91W86">
    <property type="interactions" value="2394"/>
</dbReference>
<dbReference type="IntAct" id="Q91W86">
    <property type="interactions" value="3"/>
</dbReference>
<dbReference type="STRING" id="10090.ENSMUSP00000034644"/>
<dbReference type="iPTMnet" id="Q91W86"/>
<dbReference type="PhosphoSitePlus" id="Q91W86"/>
<dbReference type="SwissPalm" id="Q91W86"/>
<dbReference type="PaxDb" id="10090-ENSMUSP00000034644"/>
<dbReference type="PeptideAtlas" id="Q91W86"/>
<dbReference type="ProteomicsDB" id="297581"/>
<dbReference type="Pumba" id="Q91W86"/>
<dbReference type="Antibodypedia" id="32587">
    <property type="antibodies" value="221 antibodies from 32 providers"/>
</dbReference>
<dbReference type="DNASU" id="71732"/>
<dbReference type="Ensembl" id="ENSMUST00000034644.10">
    <property type="protein sequence ID" value="ENSMUSP00000034644.9"/>
    <property type="gene ID" value="ENSMUSG00000032127.10"/>
</dbReference>
<dbReference type="GeneID" id="71732"/>
<dbReference type="KEGG" id="mmu:71732"/>
<dbReference type="UCSC" id="uc009pdc.2">
    <property type="organism name" value="mouse"/>
</dbReference>
<dbReference type="AGR" id="MGI:1918982"/>
<dbReference type="CTD" id="55823"/>
<dbReference type="MGI" id="MGI:1918982">
    <property type="gene designation" value="Vps11"/>
</dbReference>
<dbReference type="VEuPathDB" id="HostDB:ENSMUSG00000032127"/>
<dbReference type="eggNOG" id="KOG2114">
    <property type="taxonomic scope" value="Eukaryota"/>
</dbReference>
<dbReference type="GeneTree" id="ENSGT00940000153635"/>
<dbReference type="HOGENOM" id="CLU_001287_0_1_1"/>
<dbReference type="InParanoid" id="Q91W86"/>
<dbReference type="OMA" id="ENENECP"/>
<dbReference type="OrthoDB" id="26184at2759"/>
<dbReference type="PhylomeDB" id="Q91W86"/>
<dbReference type="TreeFam" id="TF300479"/>
<dbReference type="BioGRID-ORCS" id="71732">
    <property type="hits" value="31 hits in 82 CRISPR screens"/>
</dbReference>
<dbReference type="CD-CODE" id="CE726F99">
    <property type="entry name" value="Postsynaptic density"/>
</dbReference>
<dbReference type="ChiTaRS" id="Vps11">
    <property type="organism name" value="mouse"/>
</dbReference>
<dbReference type="PRO" id="PR:Q91W86"/>
<dbReference type="Proteomes" id="UP000000589">
    <property type="component" value="Chromosome 9"/>
</dbReference>
<dbReference type="RNAct" id="Q91W86">
    <property type="molecule type" value="protein"/>
</dbReference>
<dbReference type="Bgee" id="ENSMUSG00000032127">
    <property type="expression patterns" value="Expressed in interventricular septum and 246 other cell types or tissues"/>
</dbReference>
<dbReference type="ExpressionAtlas" id="Q91W86">
    <property type="expression patterns" value="baseline and differential"/>
</dbReference>
<dbReference type="GO" id="GO:0005884">
    <property type="term" value="C:actin filament"/>
    <property type="evidence" value="ECO:0000314"/>
    <property type="project" value="MGI"/>
</dbReference>
<dbReference type="GO" id="GO:0005776">
    <property type="term" value="C:autophagosome"/>
    <property type="evidence" value="ECO:0007669"/>
    <property type="project" value="UniProtKB-SubCell"/>
</dbReference>
<dbReference type="GO" id="GO:0030136">
    <property type="term" value="C:clathrin-coated vesicle"/>
    <property type="evidence" value="ECO:0007669"/>
    <property type="project" value="UniProtKB-SubCell"/>
</dbReference>
<dbReference type="GO" id="GO:0033263">
    <property type="term" value="C:CORVET complex"/>
    <property type="evidence" value="ECO:0000314"/>
    <property type="project" value="UniProtKB"/>
</dbReference>
<dbReference type="GO" id="GO:0005769">
    <property type="term" value="C:early endosome"/>
    <property type="evidence" value="ECO:0000314"/>
    <property type="project" value="MGI"/>
</dbReference>
<dbReference type="GO" id="GO:0030139">
    <property type="term" value="C:endocytic vesicle"/>
    <property type="evidence" value="ECO:0000250"/>
    <property type="project" value="UniProtKB"/>
</dbReference>
<dbReference type="GO" id="GO:0031902">
    <property type="term" value="C:late endosome membrane"/>
    <property type="evidence" value="ECO:0007669"/>
    <property type="project" value="UniProtKB-SubCell"/>
</dbReference>
<dbReference type="GO" id="GO:0005765">
    <property type="term" value="C:lysosomal membrane"/>
    <property type="evidence" value="ECO:0007669"/>
    <property type="project" value="UniProtKB-SubCell"/>
</dbReference>
<dbReference type="GO" id="GO:0048786">
    <property type="term" value="C:presynaptic active zone"/>
    <property type="evidence" value="ECO:0000314"/>
    <property type="project" value="SynGO"/>
</dbReference>
<dbReference type="GO" id="GO:0000166">
    <property type="term" value="F:nucleotide binding"/>
    <property type="evidence" value="ECO:0007669"/>
    <property type="project" value="UniProtKB-KW"/>
</dbReference>
<dbReference type="GO" id="GO:0008270">
    <property type="term" value="F:zinc ion binding"/>
    <property type="evidence" value="ECO:0007669"/>
    <property type="project" value="UniProtKB-KW"/>
</dbReference>
<dbReference type="GO" id="GO:0006914">
    <property type="term" value="P:autophagy"/>
    <property type="evidence" value="ECO:0007669"/>
    <property type="project" value="UniProtKB-KW"/>
</dbReference>
<dbReference type="GO" id="GO:0006886">
    <property type="term" value="P:intracellular protein transport"/>
    <property type="evidence" value="ECO:0007669"/>
    <property type="project" value="InterPro"/>
</dbReference>
<dbReference type="GO" id="GO:0016192">
    <property type="term" value="P:vesicle-mediated transport"/>
    <property type="evidence" value="ECO:0007669"/>
    <property type="project" value="InterPro"/>
</dbReference>
<dbReference type="CDD" id="cd16688">
    <property type="entry name" value="RING-H2_Vps11"/>
    <property type="match status" value="1"/>
</dbReference>
<dbReference type="FunFam" id="1.25.40.10:FF:000164">
    <property type="entry name" value="Vacuolar protein sorting-associated protein 11 homolog"/>
    <property type="match status" value="1"/>
</dbReference>
<dbReference type="FunFam" id="2.130.10.10:FF:000570">
    <property type="entry name" value="Vacuolar protein sorting-associated protein 11 homolog"/>
    <property type="match status" value="1"/>
</dbReference>
<dbReference type="FunFam" id="3.30.40.10:FF:000258">
    <property type="entry name" value="Vacuolar protein sorting-associated protein 11 homolog"/>
    <property type="match status" value="1"/>
</dbReference>
<dbReference type="Gene3D" id="1.25.40.10">
    <property type="entry name" value="Tetratricopeptide repeat domain"/>
    <property type="match status" value="1"/>
</dbReference>
<dbReference type="Gene3D" id="2.130.10.10">
    <property type="entry name" value="YVTN repeat-like/Quinoprotein amine dehydrogenase"/>
    <property type="match status" value="1"/>
</dbReference>
<dbReference type="Gene3D" id="3.30.40.10">
    <property type="entry name" value="Zinc/RING finger domain, C3HC4 (zinc finger)"/>
    <property type="match status" value="1"/>
</dbReference>
<dbReference type="InterPro" id="IPR016024">
    <property type="entry name" value="ARM-type_fold"/>
</dbReference>
<dbReference type="InterPro" id="IPR000547">
    <property type="entry name" value="Clathrin_H-chain/VPS_repeat"/>
</dbReference>
<dbReference type="InterPro" id="IPR011990">
    <property type="entry name" value="TPR-like_helical_dom_sf"/>
</dbReference>
<dbReference type="InterPro" id="IPR016528">
    <property type="entry name" value="VPS11"/>
</dbReference>
<dbReference type="InterPro" id="IPR024763">
    <property type="entry name" value="VPS11_C"/>
</dbReference>
<dbReference type="InterPro" id="IPR015943">
    <property type="entry name" value="WD40/YVTN_repeat-like_dom_sf"/>
</dbReference>
<dbReference type="InterPro" id="IPR036322">
    <property type="entry name" value="WD40_repeat_dom_sf"/>
</dbReference>
<dbReference type="InterPro" id="IPR001841">
    <property type="entry name" value="Znf_RING"/>
</dbReference>
<dbReference type="InterPro" id="IPR013083">
    <property type="entry name" value="Znf_RING/FYVE/PHD"/>
</dbReference>
<dbReference type="PANTHER" id="PTHR23323">
    <property type="entry name" value="VACUOLAR PROTEIN SORTING-ASSOCIATED PROTEIN"/>
    <property type="match status" value="1"/>
</dbReference>
<dbReference type="PANTHER" id="PTHR23323:SF24">
    <property type="entry name" value="VACUOLAR PROTEIN SORTING-ASSOCIATED PROTEIN 11 HOMOLOG"/>
    <property type="match status" value="1"/>
</dbReference>
<dbReference type="Pfam" id="PF23341">
    <property type="entry name" value="PEP5_VPS11_N"/>
    <property type="match status" value="1"/>
</dbReference>
<dbReference type="Pfam" id="PF23356">
    <property type="entry name" value="TPR_PEP5_VPS11"/>
    <property type="match status" value="1"/>
</dbReference>
<dbReference type="Pfam" id="PF12451">
    <property type="entry name" value="VPS11_C"/>
    <property type="match status" value="1"/>
</dbReference>
<dbReference type="Pfam" id="PF13923">
    <property type="entry name" value="zf-C3HC4_2"/>
    <property type="match status" value="1"/>
</dbReference>
<dbReference type="PIRSF" id="PIRSF007860">
    <property type="entry name" value="VPS11"/>
    <property type="match status" value="1"/>
</dbReference>
<dbReference type="SMART" id="SM00184">
    <property type="entry name" value="RING"/>
    <property type="match status" value="1"/>
</dbReference>
<dbReference type="SUPFAM" id="SSF48371">
    <property type="entry name" value="ARM repeat"/>
    <property type="match status" value="1"/>
</dbReference>
<dbReference type="SUPFAM" id="SSF57850">
    <property type="entry name" value="RING/U-box"/>
    <property type="match status" value="1"/>
</dbReference>
<dbReference type="SUPFAM" id="SSF50978">
    <property type="entry name" value="WD40 repeat-like"/>
    <property type="match status" value="1"/>
</dbReference>
<dbReference type="PROSITE" id="PS50236">
    <property type="entry name" value="CHCR"/>
    <property type="match status" value="2"/>
</dbReference>
<dbReference type="PROSITE" id="PS50089">
    <property type="entry name" value="ZF_RING_2"/>
    <property type="match status" value="1"/>
</dbReference>
<sequence length="941" mass="107719">MAAYLQWRRFVFFEKELVKEPLGNDGAAPGAAPVSGSAASKFLCLPPGITVCDSGRGSLVFGDMEGQIWFLPRSLQLTGFQAYKLRVTHLYQLKQHNILASVGEDEEGINPLVKIWNLEKRDGGNPLCTRIFPAIPGTEPTVVSCLTVHENLNFMAIGFTDGSVTLNKGDITRDRHSKTQILHKGNYPVTGLAFRQAGKTTHLFVVTTENVQSYIVSGKDYPRVELDTHGCGLRCSALSDPSQDLQFIVAGDECVYLYQPDERGPCFAFEGHKLIVHWFRGYLVIVSRDRKVSPKSEFTSRDSQNSDKQILNIYDLCNKFIAYSAGFEDIVDVLAEWGSLYVLTRDGRVHALQEKDTQTKLEMLFKKNLFEMAINLAKSQHLDSDGLAQIFMQYGDHLYSKGNHDGAVQQYIRTIGKLEPSYVIRKFLDAQRIHNLTAYLQTLHRQSLANADHTTLLLNCYTKLKDSSKLEEFIKTKSESEVHFDVETAIKVLRQAGYYSHALYLAENHAHHEWYLKIQLEDIKNYQEALRYIGKLPFEQAESNMKRYGKTLMHHIPEQTTQLLKGLCTDYRPSLEGRGDREALSCRASSEEFIPIFANNPRELKAFLEHMSEVQPDSPQGIYDTLLELRLQNWAHEKDPQAKEKLHAEAISLLKSGRFCDVFDKALVLCQMHDFQDGVLYLYEQGKLFQQIMHYHMQHEQYRQVIAVCERHGEQEPSLWEQALSYFARKEEDCKEYVAAVLRHIENKSLMPPLLVVQTLAHNSTATLSIIRDYLVQKLQKQSQQIAQDELRVRRYREETTRIRQEIQELKASPKIFQKTKCSICNSALELPSVHFLCGHSFHQHCFESYSESDADCPTCLPENRKVMDMIRAQEQKRDLHDQFQHQLKCSNDSFSVIADYFGRGVFNKLTLLTDPPTARLTPSLEAGLQRDLLMHSRRGT</sequence>
<accession>Q91W86</accession>
<accession>Q5FWZ1</accession>
<accession>Q9DBX8</accession>
<organism>
    <name type="scientific">Mus musculus</name>
    <name type="common">Mouse</name>
    <dbReference type="NCBI Taxonomy" id="10090"/>
    <lineage>
        <taxon>Eukaryota</taxon>
        <taxon>Metazoa</taxon>
        <taxon>Chordata</taxon>
        <taxon>Craniata</taxon>
        <taxon>Vertebrata</taxon>
        <taxon>Euteleostomi</taxon>
        <taxon>Mammalia</taxon>
        <taxon>Eutheria</taxon>
        <taxon>Euarchontoglires</taxon>
        <taxon>Glires</taxon>
        <taxon>Rodentia</taxon>
        <taxon>Myomorpha</taxon>
        <taxon>Muroidea</taxon>
        <taxon>Muridae</taxon>
        <taxon>Murinae</taxon>
        <taxon>Mus</taxon>
        <taxon>Mus</taxon>
    </lineage>
</organism>
<evidence type="ECO:0000250" key="1">
    <source>
        <dbReference type="UniProtKB" id="Q9H270"/>
    </source>
</evidence>
<evidence type="ECO:0000255" key="2"/>
<evidence type="ECO:0000255" key="3">
    <source>
        <dbReference type="PROSITE-ProRule" id="PRU00175"/>
    </source>
</evidence>
<evidence type="ECO:0000269" key="4">
    <source>
    </source>
</evidence>
<evidence type="ECO:0000269" key="5">
    <source>
    </source>
</evidence>
<evidence type="ECO:0000305" key="6"/>
<evidence type="ECO:0000305" key="7">
    <source>
    </source>
</evidence>
<evidence type="ECO:0007744" key="8">
    <source>
    </source>
</evidence>
<gene>
    <name type="primary">Vps11</name>
</gene>
<name>VPS11_MOUSE</name>
<reference key="1">
    <citation type="journal article" date="2005" name="Science">
        <title>The transcriptional landscape of the mammalian genome.</title>
        <authorList>
            <person name="Carninci P."/>
            <person name="Kasukawa T."/>
            <person name="Katayama S."/>
            <person name="Gough J."/>
            <person name="Frith M.C."/>
            <person name="Maeda N."/>
            <person name="Oyama R."/>
            <person name="Ravasi T."/>
            <person name="Lenhard B."/>
            <person name="Wells C."/>
            <person name="Kodzius R."/>
            <person name="Shimokawa K."/>
            <person name="Bajic V.B."/>
            <person name="Brenner S.E."/>
            <person name="Batalov S."/>
            <person name="Forrest A.R."/>
            <person name="Zavolan M."/>
            <person name="Davis M.J."/>
            <person name="Wilming L.G."/>
            <person name="Aidinis V."/>
            <person name="Allen J.E."/>
            <person name="Ambesi-Impiombato A."/>
            <person name="Apweiler R."/>
            <person name="Aturaliya R.N."/>
            <person name="Bailey T.L."/>
            <person name="Bansal M."/>
            <person name="Baxter L."/>
            <person name="Beisel K.W."/>
            <person name="Bersano T."/>
            <person name="Bono H."/>
            <person name="Chalk A.M."/>
            <person name="Chiu K.P."/>
            <person name="Choudhary V."/>
            <person name="Christoffels A."/>
            <person name="Clutterbuck D.R."/>
            <person name="Crowe M.L."/>
            <person name="Dalla E."/>
            <person name="Dalrymple B.P."/>
            <person name="de Bono B."/>
            <person name="Della Gatta G."/>
            <person name="di Bernardo D."/>
            <person name="Down T."/>
            <person name="Engstrom P."/>
            <person name="Fagiolini M."/>
            <person name="Faulkner G."/>
            <person name="Fletcher C.F."/>
            <person name="Fukushima T."/>
            <person name="Furuno M."/>
            <person name="Futaki S."/>
            <person name="Gariboldi M."/>
            <person name="Georgii-Hemming P."/>
            <person name="Gingeras T.R."/>
            <person name="Gojobori T."/>
            <person name="Green R.E."/>
            <person name="Gustincich S."/>
            <person name="Harbers M."/>
            <person name="Hayashi Y."/>
            <person name="Hensch T.K."/>
            <person name="Hirokawa N."/>
            <person name="Hill D."/>
            <person name="Huminiecki L."/>
            <person name="Iacono M."/>
            <person name="Ikeo K."/>
            <person name="Iwama A."/>
            <person name="Ishikawa T."/>
            <person name="Jakt M."/>
            <person name="Kanapin A."/>
            <person name="Katoh M."/>
            <person name="Kawasawa Y."/>
            <person name="Kelso J."/>
            <person name="Kitamura H."/>
            <person name="Kitano H."/>
            <person name="Kollias G."/>
            <person name="Krishnan S.P."/>
            <person name="Kruger A."/>
            <person name="Kummerfeld S.K."/>
            <person name="Kurochkin I.V."/>
            <person name="Lareau L.F."/>
            <person name="Lazarevic D."/>
            <person name="Lipovich L."/>
            <person name="Liu J."/>
            <person name="Liuni S."/>
            <person name="McWilliam S."/>
            <person name="Madan Babu M."/>
            <person name="Madera M."/>
            <person name="Marchionni L."/>
            <person name="Matsuda H."/>
            <person name="Matsuzawa S."/>
            <person name="Miki H."/>
            <person name="Mignone F."/>
            <person name="Miyake S."/>
            <person name="Morris K."/>
            <person name="Mottagui-Tabar S."/>
            <person name="Mulder N."/>
            <person name="Nakano N."/>
            <person name="Nakauchi H."/>
            <person name="Ng P."/>
            <person name="Nilsson R."/>
            <person name="Nishiguchi S."/>
            <person name="Nishikawa S."/>
            <person name="Nori F."/>
            <person name="Ohara O."/>
            <person name="Okazaki Y."/>
            <person name="Orlando V."/>
            <person name="Pang K.C."/>
            <person name="Pavan W.J."/>
            <person name="Pavesi G."/>
            <person name="Pesole G."/>
            <person name="Petrovsky N."/>
            <person name="Piazza S."/>
            <person name="Reed J."/>
            <person name="Reid J.F."/>
            <person name="Ring B.Z."/>
            <person name="Ringwald M."/>
            <person name="Rost B."/>
            <person name="Ruan Y."/>
            <person name="Salzberg S.L."/>
            <person name="Sandelin A."/>
            <person name="Schneider C."/>
            <person name="Schoenbach C."/>
            <person name="Sekiguchi K."/>
            <person name="Semple C.A."/>
            <person name="Seno S."/>
            <person name="Sessa L."/>
            <person name="Sheng Y."/>
            <person name="Shibata Y."/>
            <person name="Shimada H."/>
            <person name="Shimada K."/>
            <person name="Silva D."/>
            <person name="Sinclair B."/>
            <person name="Sperling S."/>
            <person name="Stupka E."/>
            <person name="Sugiura K."/>
            <person name="Sultana R."/>
            <person name="Takenaka Y."/>
            <person name="Taki K."/>
            <person name="Tammoja K."/>
            <person name="Tan S.L."/>
            <person name="Tang S."/>
            <person name="Taylor M.S."/>
            <person name="Tegner J."/>
            <person name="Teichmann S.A."/>
            <person name="Ueda H.R."/>
            <person name="van Nimwegen E."/>
            <person name="Verardo R."/>
            <person name="Wei C.L."/>
            <person name="Yagi K."/>
            <person name="Yamanishi H."/>
            <person name="Zabarovsky E."/>
            <person name="Zhu S."/>
            <person name="Zimmer A."/>
            <person name="Hide W."/>
            <person name="Bult C."/>
            <person name="Grimmond S.M."/>
            <person name="Teasdale R.D."/>
            <person name="Liu E.T."/>
            <person name="Brusic V."/>
            <person name="Quackenbush J."/>
            <person name="Wahlestedt C."/>
            <person name="Mattick J.S."/>
            <person name="Hume D.A."/>
            <person name="Kai C."/>
            <person name="Sasaki D."/>
            <person name="Tomaru Y."/>
            <person name="Fukuda S."/>
            <person name="Kanamori-Katayama M."/>
            <person name="Suzuki M."/>
            <person name="Aoki J."/>
            <person name="Arakawa T."/>
            <person name="Iida J."/>
            <person name="Imamura K."/>
            <person name="Itoh M."/>
            <person name="Kato T."/>
            <person name="Kawaji H."/>
            <person name="Kawagashira N."/>
            <person name="Kawashima T."/>
            <person name="Kojima M."/>
            <person name="Kondo S."/>
            <person name="Konno H."/>
            <person name="Nakano K."/>
            <person name="Ninomiya N."/>
            <person name="Nishio T."/>
            <person name="Okada M."/>
            <person name="Plessy C."/>
            <person name="Shibata K."/>
            <person name="Shiraki T."/>
            <person name="Suzuki S."/>
            <person name="Tagami M."/>
            <person name="Waki K."/>
            <person name="Watahiki A."/>
            <person name="Okamura-Oho Y."/>
            <person name="Suzuki H."/>
            <person name="Kawai J."/>
            <person name="Hayashizaki Y."/>
        </authorList>
    </citation>
    <scope>NUCLEOTIDE SEQUENCE [LARGE SCALE MRNA]</scope>
    <source>
        <strain>C57BL/6J</strain>
        <tissue>Lung</tissue>
    </source>
</reference>
<reference key="2">
    <citation type="journal article" date="2004" name="Genome Res.">
        <title>The status, quality, and expansion of the NIH full-length cDNA project: the Mammalian Gene Collection (MGC).</title>
        <authorList>
            <consortium name="The MGC Project Team"/>
        </authorList>
    </citation>
    <scope>NUCLEOTIDE SEQUENCE [LARGE SCALE MRNA]</scope>
    <source>
        <tissue>Eye</tissue>
        <tissue>Salivary gland</tissue>
    </source>
</reference>
<reference key="3">
    <citation type="journal article" date="2010" name="Cell">
        <title>A tissue-specific atlas of mouse protein phosphorylation and expression.</title>
        <authorList>
            <person name="Huttlin E.L."/>
            <person name="Jedrychowski M.P."/>
            <person name="Elias J.E."/>
            <person name="Goswami T."/>
            <person name="Rad R."/>
            <person name="Beausoleil S.A."/>
            <person name="Villen J."/>
            <person name="Haas W."/>
            <person name="Sowa M.E."/>
            <person name="Gygi S.P."/>
        </authorList>
    </citation>
    <scope>IDENTIFICATION BY MASS SPECTROMETRY [LARGE SCALE ANALYSIS]</scope>
    <source>
        <tissue>Brain</tissue>
        <tissue>Kidney</tissue>
        <tissue>Liver</tissue>
        <tissue>Lung</tissue>
        <tissue>Spleen</tissue>
        <tissue>Testis</tissue>
    </source>
</reference>
<reference key="4">
    <citation type="journal article" date="2011" name="Mol. Biol. Cell">
        <title>Clathrin-dependent mechanisms modulate the subcellular distribution of class C Vps/HOPS tether subunits in polarized and nonpolarized cells.</title>
        <authorList>
            <person name="Zlatic S.A."/>
            <person name="Tornieri K."/>
            <person name="L'Hernault S.W."/>
            <person name="Faundez V."/>
        </authorList>
    </citation>
    <scope>SUBUNIT</scope>
</reference>
<reference key="5">
    <citation type="journal article" date="2014" name="Mol. Cell. Proteomics">
        <title>Immunoaffinity enrichment and mass spectrometry analysis of protein methylation.</title>
        <authorList>
            <person name="Guo A."/>
            <person name="Gu H."/>
            <person name="Zhou J."/>
            <person name="Mulhern D."/>
            <person name="Wang Y."/>
            <person name="Lee K.A."/>
            <person name="Yang V."/>
            <person name="Aguiar M."/>
            <person name="Kornhauser J."/>
            <person name="Jia X."/>
            <person name="Ren J."/>
            <person name="Beausoleil S.A."/>
            <person name="Silva J.C."/>
            <person name="Vemulapalli V."/>
            <person name="Bedford M.T."/>
            <person name="Comb M.J."/>
        </authorList>
    </citation>
    <scope>METHYLATION [LARGE SCALE ANALYSIS] AT ARG-904</scope>
    <scope>IDENTIFICATION BY MASS SPECTROMETRY [LARGE SCALE ANALYSIS]</scope>
    <source>
        <tissue>Brain</tissue>
    </source>
</reference>
<reference key="6">
    <citation type="journal article" date="2014" name="Traffic">
        <title>Mammalian CORVET is required for fusion and conversion of distinct early endosome subpopulations.</title>
        <authorList>
            <person name="Perini E.D."/>
            <person name="Schaefer R."/>
            <person name="Stoeter M."/>
            <person name="Kalaidzidis Y."/>
            <person name="Zerial M."/>
        </authorList>
    </citation>
    <scope>SUBUNIT</scope>
    <scope>INTERACTION WITH RAB5C</scope>
</reference>